<comment type="function">
    <text evidence="1 3">Gating-modifier toxin that inhibits mammalian and insect voltage-gated sodium channels. It shifts the voltage dependence of channel activation to more positive voltages. It shows potent activity on Nav1.4/SCN4A (IC(50)=103 nM), Nav1.5/SCN5A (IC(50)=268 nM) and Para/DmNav1 (IC(50)=555 nM) and lower activities on Nav1.2/SCN2A (IC(50)=1447 nM) and Nav1.6/SCN8A (IC(50)=3504 nM) (PubMed:25352595). In addition, at a concentration of 1 uM, the toxin inhibits 90-100% of sodium current through Nav1.2/SCN2A, Nav1.4/SCN4A, Nav1.5/SCN5A, Nav1.6/SCN8A and Para/DmNav1 channels, when the voltage of maximal activation of the channel in control conditions is applied (Ref.1). It binds to the S3-S4 helix-loop-helix motif in the voltage-sensing domain of repeat 1 (shown on hNav1.4/SCN4A) (PubMed:29636418). The toxin is amphiphilic and binds to both neutral and negatively charged lipid vesicles with high affinity (PubMed:25352595, PubMed:29636418). The hydrophobic face lies on the opposite side to the hydrophobic faces of classical gating modifiers (PubMed:25352595).</text>
</comment>
<comment type="subcellular location">
    <subcellularLocation>
        <location evidence="3">Secreted</location>
    </subcellularLocation>
</comment>
<comment type="tissue specificity">
    <text evidence="6">Expressed by the venom gland.</text>
</comment>
<comment type="domain">
    <text evidence="1">The presence of a 'disulfide through disulfide knot' structurally defines this protein as a knottin.</text>
</comment>
<comment type="mass spectrometry"/>
<comment type="miscellaneous">
    <text evidence="2">May be interesting for the development of therapies to treat the periodic paralysis hypokalemic 2 (HOKPP2), since it inhibits I(GP) leak currents of HOKPP2 p.R222G/W channels.</text>
</comment>
<comment type="miscellaneous">
    <text evidence="1">Negative results: does not inhibit Nav1.1/SCN1A, Nav1.3/SCN3A and Nav1.8/SCN10A sodium channels, Kv1.1/KCNA1, Kv1.3/KCNA3, Kv2.1/KCNB1, Kv4.2/KCND2 and Kv10.1/KCNH1 potassium channels and Cav3.3/CACNA1I calcium channels when 1 uM is tested.</text>
</comment>
<comment type="similarity">
    <text evidence="5">Belongs to the neurotoxin 07 (Beta/delta-agtx) family.</text>
</comment>
<reference key="1">
    <citation type="journal article" date="2009" name="Biochemistry (Mosc.) Suppl. Series A">
        <title>Voltage-gated sodium channels are targets for toxins from the venom of the spider Heriaeus melloteei.</title>
        <authorList>
            <person name="Nikolsky A."/>
            <person name="Billen B."/>
            <person name="Vassilevski A."/>
            <person name="Filkin S."/>
            <person name="Tytgat J."/>
            <person name="Grishin E."/>
        </authorList>
    </citation>
    <scope>PROTEIN SEQUENCE</scope>
    <scope>FUNCTION</scope>
    <scope>SUBCELLULAR LOCATION</scope>
    <scope>MASS SPECTROMETRY</scope>
    <source>
        <tissue>Venom</tissue>
    </source>
</reference>
<reference key="2">
    <citation type="journal article" date="2015" name="J. Biol. Chem.">
        <title>Structure of membrane-active toxin from crab spider Heriaeus melloteei suggests parallel evolution of sodium channel gating modifiers in Araneomorphae and Mygalomorphae.</title>
        <authorList>
            <person name="Berkut A.A."/>
            <person name="Peigneur S."/>
            <person name="Myshkin M.Y."/>
            <person name="Paramonov A.S."/>
            <person name="Lyukmanova E.N."/>
            <person name="Arseniev A.S."/>
            <person name="Grishin E.V."/>
            <person name="Tytgat J."/>
            <person name="Shenkarev Z.O."/>
            <person name="Vassilevski A.A."/>
        </authorList>
    </citation>
    <scope>STRUCTURE BY NMR</scope>
    <scope>FUNCTION</scope>
    <scope>DISULFIDE BOND</scope>
    <scope>DOMAIN</scope>
    <source>
        <tissue>Venom</tissue>
    </source>
</reference>
<reference key="3">
    <citation type="journal article" date="2018" name="Proc. Natl. Acad. Sci. U.S.A.">
        <title>Spider toxin inhibits gating pore currents underlying periodic paralysis.</title>
        <authorList>
            <person name="Maennikkoe R."/>
            <person name="Shenkarev Z.O."/>
            <person name="Thor M.G."/>
            <person name="Berkut A.A."/>
            <person name="Myshkin M.Y."/>
            <person name="Paramonov A.S."/>
            <person name="Kulbatskii D.S."/>
            <person name="Kuzmin D.A."/>
            <person name="Sampedro Castaneda M."/>
            <person name="King L."/>
            <person name="Wilson E.R."/>
            <person name="Lyukmanova E.N."/>
            <person name="Kirpichnikov M.P."/>
            <person name="Schorge S."/>
            <person name="Bosmans F."/>
            <person name="Hanna M.G."/>
            <person name="Kullmann D.M."/>
            <person name="Vassilevski A.A."/>
        </authorList>
    </citation>
    <scope>STRUCTURE BY NMR IN COMPLEX WITH HUMAN NAV1.4/SCN4A REPEAT I AND MEMBRANE</scope>
    <scope>FUNCTION</scope>
    <scope>3D-STRUCTURE MODELING IN COMPLEX WITH NAV1.4/SCN4A</scope>
</reference>
<sequence>GCIAKNKECAWFSGEWCCGALSCKYSIKRNLKICV</sequence>
<evidence type="ECO:0000269" key="1">
    <source>
    </source>
</evidence>
<evidence type="ECO:0000269" key="2">
    <source>
    </source>
</evidence>
<evidence type="ECO:0000269" key="3">
    <source ref="1"/>
</evidence>
<evidence type="ECO:0000303" key="4">
    <source ref="1"/>
</evidence>
<evidence type="ECO:0000305" key="5"/>
<evidence type="ECO:0000305" key="6">
    <source ref="1"/>
</evidence>
<evidence type="ECO:0000312" key="7">
    <source>
        <dbReference type="PDB" id="2MQU"/>
    </source>
</evidence>
<evidence type="ECO:0007829" key="8">
    <source>
        <dbReference type="PDB" id="2MQU"/>
    </source>
</evidence>
<proteinExistence type="evidence at protein level"/>
<accession>C0HJK5</accession>
<dbReference type="PDB" id="2MQU">
    <property type="method" value="NMR"/>
    <property type="chains" value="A=1-35"/>
</dbReference>
<dbReference type="PDBsum" id="2MQU"/>
<dbReference type="BMRB" id="C0HJK5"/>
<dbReference type="SMR" id="C0HJK5"/>
<dbReference type="EvolutionaryTrace" id="C0HJK5"/>
<dbReference type="GO" id="GO:0005576">
    <property type="term" value="C:extracellular region"/>
    <property type="evidence" value="ECO:0007669"/>
    <property type="project" value="UniProtKB-SubCell"/>
</dbReference>
<dbReference type="GO" id="GO:0017080">
    <property type="term" value="F:sodium channel regulator activity"/>
    <property type="evidence" value="ECO:0007669"/>
    <property type="project" value="UniProtKB-KW"/>
</dbReference>
<dbReference type="GO" id="GO:0090729">
    <property type="term" value="F:toxin activity"/>
    <property type="evidence" value="ECO:0007669"/>
    <property type="project" value="UniProtKB-KW"/>
</dbReference>
<feature type="peptide" id="PRO_0000430081" description="Mu-thomitoxin-Hme1c" evidence="3">
    <location>
        <begin position="1"/>
        <end position="35"/>
    </location>
</feature>
<feature type="disulfide bond" evidence="1 7">
    <location>
        <begin position="2"/>
        <end position="18"/>
    </location>
</feature>
<feature type="disulfide bond" evidence="1 7">
    <location>
        <begin position="9"/>
        <end position="23"/>
    </location>
</feature>
<feature type="disulfide bond" evidence="1 7">
    <location>
        <begin position="17"/>
        <end position="34"/>
    </location>
</feature>
<feature type="strand" evidence="8">
    <location>
        <begin position="22"/>
        <end position="26"/>
    </location>
</feature>
<feature type="helix" evidence="8">
    <location>
        <begin position="27"/>
        <end position="29"/>
    </location>
</feature>
<feature type="strand" evidence="8">
    <location>
        <begin position="31"/>
        <end position="35"/>
    </location>
</feature>
<name>TXHM3_HERML</name>
<protein>
    <recommendedName>
        <fullName evidence="5">Mu-thomitoxin-Hme1c</fullName>
        <shortName evidence="5">Mu-TMTX-Hme1c</shortName>
    </recommendedName>
    <alternativeName>
        <fullName evidence="4">Neurotoxin Hm-3</fullName>
    </alternativeName>
</protein>
<keyword id="KW-0002">3D-structure</keyword>
<keyword id="KW-0903">Direct protein sequencing</keyword>
<keyword id="KW-1015">Disulfide bond</keyword>
<keyword id="KW-0872">Ion channel impairing toxin</keyword>
<keyword id="KW-0960">Knottin</keyword>
<keyword id="KW-0528">Neurotoxin</keyword>
<keyword id="KW-0964">Secreted</keyword>
<keyword id="KW-0800">Toxin</keyword>
<keyword id="KW-0738">Voltage-gated sodium channel impairing toxin</keyword>
<organism>
    <name type="scientific">Heriaeus mellotteei</name>
    <name type="common">Crab spider</name>
    <name type="synonym">Heriaeus oblongus</name>
    <dbReference type="NCBI Taxonomy" id="2337432"/>
    <lineage>
        <taxon>Eukaryota</taxon>
        <taxon>Metazoa</taxon>
        <taxon>Ecdysozoa</taxon>
        <taxon>Arthropoda</taxon>
        <taxon>Chelicerata</taxon>
        <taxon>Arachnida</taxon>
        <taxon>Araneae</taxon>
        <taxon>Araneomorphae</taxon>
        <taxon>Entelegynae</taxon>
        <taxon>Dionycha</taxon>
        <taxon>Thomisidae</taxon>
        <taxon>Heriaeus</taxon>
    </lineage>
</organism>